<sequence>MATKKAGGSSRNGRDSAGRRLGVKKADGQYVIPGNIIVRQRGTKIHPGTNVGLGKDHTIFALIEGRVEFLTKRNHKIVNVKEIAST</sequence>
<comment type="similarity">
    <text evidence="1">Belongs to the bacterial ribosomal protein bL27 family.</text>
</comment>
<protein>
    <recommendedName>
        <fullName evidence="1">Large ribosomal subunit protein bL27</fullName>
    </recommendedName>
    <alternativeName>
        <fullName evidence="3">50S ribosomal protein L27</fullName>
    </alternativeName>
</protein>
<accession>Q92GG0</accession>
<gene>
    <name evidence="1" type="primary">rpmA</name>
    <name type="ordered locus">RC1163</name>
</gene>
<organism>
    <name type="scientific">Rickettsia conorii (strain ATCC VR-613 / Malish 7)</name>
    <dbReference type="NCBI Taxonomy" id="272944"/>
    <lineage>
        <taxon>Bacteria</taxon>
        <taxon>Pseudomonadati</taxon>
        <taxon>Pseudomonadota</taxon>
        <taxon>Alphaproteobacteria</taxon>
        <taxon>Rickettsiales</taxon>
        <taxon>Rickettsiaceae</taxon>
        <taxon>Rickettsieae</taxon>
        <taxon>Rickettsia</taxon>
        <taxon>spotted fever group</taxon>
    </lineage>
</organism>
<feature type="chain" id="PRO_0000181155" description="Large ribosomal subunit protein bL27">
    <location>
        <begin position="1"/>
        <end position="86"/>
    </location>
</feature>
<feature type="region of interest" description="Disordered" evidence="2">
    <location>
        <begin position="1"/>
        <end position="24"/>
    </location>
</feature>
<proteinExistence type="inferred from homology"/>
<reference key="1">
    <citation type="journal article" date="2001" name="Science">
        <title>Mechanisms of evolution in Rickettsia conorii and R. prowazekii.</title>
        <authorList>
            <person name="Ogata H."/>
            <person name="Audic S."/>
            <person name="Renesto-Audiffren P."/>
            <person name="Fournier P.-E."/>
            <person name="Barbe V."/>
            <person name="Samson D."/>
            <person name="Roux V."/>
            <person name="Cossart P."/>
            <person name="Weissenbach J."/>
            <person name="Claverie J.-M."/>
            <person name="Raoult D."/>
        </authorList>
    </citation>
    <scope>NUCLEOTIDE SEQUENCE [LARGE SCALE GENOMIC DNA]</scope>
    <source>
        <strain>ATCC VR-613 / Malish 7</strain>
    </source>
</reference>
<keyword id="KW-0687">Ribonucleoprotein</keyword>
<keyword id="KW-0689">Ribosomal protein</keyword>
<evidence type="ECO:0000255" key="1">
    <source>
        <dbReference type="HAMAP-Rule" id="MF_00539"/>
    </source>
</evidence>
<evidence type="ECO:0000256" key="2">
    <source>
        <dbReference type="SAM" id="MobiDB-lite"/>
    </source>
</evidence>
<evidence type="ECO:0000305" key="3"/>
<dbReference type="EMBL" id="AE006914">
    <property type="protein sequence ID" value="AAL03701.1"/>
    <property type="molecule type" value="Genomic_DNA"/>
</dbReference>
<dbReference type="PIR" id="C97845">
    <property type="entry name" value="C97845"/>
</dbReference>
<dbReference type="RefSeq" id="WP_004997475.1">
    <property type="nucleotide sequence ID" value="NC_003103.1"/>
</dbReference>
<dbReference type="SMR" id="Q92GG0"/>
<dbReference type="GeneID" id="95361582"/>
<dbReference type="KEGG" id="rco:RC1163"/>
<dbReference type="HOGENOM" id="CLU_095424_4_1_5"/>
<dbReference type="Proteomes" id="UP000000816">
    <property type="component" value="Chromosome"/>
</dbReference>
<dbReference type="GO" id="GO:1990904">
    <property type="term" value="C:ribonucleoprotein complex"/>
    <property type="evidence" value="ECO:0007669"/>
    <property type="project" value="UniProtKB-KW"/>
</dbReference>
<dbReference type="GO" id="GO:0005840">
    <property type="term" value="C:ribosome"/>
    <property type="evidence" value="ECO:0007669"/>
    <property type="project" value="UniProtKB-KW"/>
</dbReference>
<dbReference type="GO" id="GO:0003735">
    <property type="term" value="F:structural constituent of ribosome"/>
    <property type="evidence" value="ECO:0007669"/>
    <property type="project" value="InterPro"/>
</dbReference>
<dbReference type="GO" id="GO:0006412">
    <property type="term" value="P:translation"/>
    <property type="evidence" value="ECO:0007669"/>
    <property type="project" value="UniProtKB-UniRule"/>
</dbReference>
<dbReference type="FunFam" id="2.40.50.100:FF:000020">
    <property type="entry name" value="50S ribosomal protein L27"/>
    <property type="match status" value="1"/>
</dbReference>
<dbReference type="Gene3D" id="2.40.50.100">
    <property type="match status" value="1"/>
</dbReference>
<dbReference type="HAMAP" id="MF_00539">
    <property type="entry name" value="Ribosomal_bL27"/>
    <property type="match status" value="1"/>
</dbReference>
<dbReference type="InterPro" id="IPR001684">
    <property type="entry name" value="Ribosomal_bL27"/>
</dbReference>
<dbReference type="InterPro" id="IPR018261">
    <property type="entry name" value="Ribosomal_bL27_CS"/>
</dbReference>
<dbReference type="NCBIfam" id="TIGR00062">
    <property type="entry name" value="L27"/>
    <property type="match status" value="1"/>
</dbReference>
<dbReference type="PANTHER" id="PTHR15893:SF0">
    <property type="entry name" value="LARGE RIBOSOMAL SUBUNIT PROTEIN BL27M"/>
    <property type="match status" value="1"/>
</dbReference>
<dbReference type="PANTHER" id="PTHR15893">
    <property type="entry name" value="RIBOSOMAL PROTEIN L27"/>
    <property type="match status" value="1"/>
</dbReference>
<dbReference type="Pfam" id="PF01016">
    <property type="entry name" value="Ribosomal_L27"/>
    <property type="match status" value="1"/>
</dbReference>
<dbReference type="PRINTS" id="PR00063">
    <property type="entry name" value="RIBOSOMALL27"/>
</dbReference>
<dbReference type="SUPFAM" id="SSF110324">
    <property type="entry name" value="Ribosomal L27 protein-like"/>
    <property type="match status" value="1"/>
</dbReference>
<dbReference type="PROSITE" id="PS00831">
    <property type="entry name" value="RIBOSOMAL_L27"/>
    <property type="match status" value="1"/>
</dbReference>
<name>RL27_RICCN</name>